<gene>
    <name evidence="1" type="primary">rlmD</name>
    <name type="synonym">rumA</name>
    <name type="ordered locus">Sputcn32_2766</name>
</gene>
<protein>
    <recommendedName>
        <fullName evidence="1">23S rRNA (uracil(1939)-C(5))-methyltransferase RlmD</fullName>
        <ecNumber evidence="1">2.1.1.190</ecNumber>
    </recommendedName>
    <alternativeName>
        <fullName evidence="1">23S rRNA(m5U1939)-methyltransferase</fullName>
    </alternativeName>
</protein>
<keyword id="KW-0004">4Fe-4S</keyword>
<keyword id="KW-0408">Iron</keyword>
<keyword id="KW-0411">Iron-sulfur</keyword>
<keyword id="KW-0479">Metal-binding</keyword>
<keyword id="KW-0489">Methyltransferase</keyword>
<keyword id="KW-0698">rRNA processing</keyword>
<keyword id="KW-0949">S-adenosyl-L-methionine</keyword>
<keyword id="KW-0808">Transferase</keyword>
<evidence type="ECO:0000255" key="1">
    <source>
        <dbReference type="HAMAP-Rule" id="MF_01010"/>
    </source>
</evidence>
<reference key="1">
    <citation type="submission" date="2007-04" db="EMBL/GenBank/DDBJ databases">
        <title>Complete sequence of Shewanella putrefaciens CN-32.</title>
        <authorList>
            <consortium name="US DOE Joint Genome Institute"/>
            <person name="Copeland A."/>
            <person name="Lucas S."/>
            <person name="Lapidus A."/>
            <person name="Barry K."/>
            <person name="Detter J.C."/>
            <person name="Glavina del Rio T."/>
            <person name="Hammon N."/>
            <person name="Israni S."/>
            <person name="Dalin E."/>
            <person name="Tice H."/>
            <person name="Pitluck S."/>
            <person name="Chain P."/>
            <person name="Malfatti S."/>
            <person name="Shin M."/>
            <person name="Vergez L."/>
            <person name="Schmutz J."/>
            <person name="Larimer F."/>
            <person name="Land M."/>
            <person name="Hauser L."/>
            <person name="Kyrpides N."/>
            <person name="Mikhailova N."/>
            <person name="Romine M.F."/>
            <person name="Fredrickson J."/>
            <person name="Tiedje J."/>
            <person name="Richardson P."/>
        </authorList>
    </citation>
    <scope>NUCLEOTIDE SEQUENCE [LARGE SCALE GENOMIC DNA]</scope>
    <source>
        <strain>CN-32 / ATCC BAA-453</strain>
    </source>
</reference>
<organism>
    <name type="scientific">Shewanella putrefaciens (strain CN-32 / ATCC BAA-453)</name>
    <dbReference type="NCBI Taxonomy" id="319224"/>
    <lineage>
        <taxon>Bacteria</taxon>
        <taxon>Pseudomonadati</taxon>
        <taxon>Pseudomonadota</taxon>
        <taxon>Gammaproteobacteria</taxon>
        <taxon>Alteromonadales</taxon>
        <taxon>Shewanellaceae</taxon>
        <taxon>Shewanella</taxon>
    </lineage>
</organism>
<feature type="chain" id="PRO_1000200854" description="23S rRNA (uracil(1939)-C(5))-methyltransferase RlmD">
    <location>
        <begin position="1"/>
        <end position="450"/>
    </location>
</feature>
<feature type="domain" description="TRAM" evidence="1">
    <location>
        <begin position="12"/>
        <end position="70"/>
    </location>
</feature>
<feature type="active site" description="Nucleophile" evidence="1">
    <location>
        <position position="406"/>
    </location>
</feature>
<feature type="binding site" evidence="1">
    <location>
        <position position="83"/>
    </location>
    <ligand>
        <name>[4Fe-4S] cluster</name>
        <dbReference type="ChEBI" id="CHEBI:49883"/>
    </ligand>
</feature>
<feature type="binding site" evidence="1">
    <location>
        <position position="89"/>
    </location>
    <ligand>
        <name>[4Fe-4S] cluster</name>
        <dbReference type="ChEBI" id="CHEBI:49883"/>
    </ligand>
</feature>
<feature type="binding site" evidence="1">
    <location>
        <position position="92"/>
    </location>
    <ligand>
        <name>[4Fe-4S] cluster</name>
        <dbReference type="ChEBI" id="CHEBI:49883"/>
    </ligand>
</feature>
<feature type="binding site" evidence="1">
    <location>
        <position position="171"/>
    </location>
    <ligand>
        <name>[4Fe-4S] cluster</name>
        <dbReference type="ChEBI" id="CHEBI:49883"/>
    </ligand>
</feature>
<feature type="binding site" evidence="1">
    <location>
        <position position="283"/>
    </location>
    <ligand>
        <name>S-adenosyl-L-methionine</name>
        <dbReference type="ChEBI" id="CHEBI:59789"/>
    </ligand>
</feature>
<feature type="binding site" evidence="1">
    <location>
        <position position="312"/>
    </location>
    <ligand>
        <name>S-adenosyl-L-methionine</name>
        <dbReference type="ChEBI" id="CHEBI:59789"/>
    </ligand>
</feature>
<feature type="binding site" evidence="1">
    <location>
        <position position="317"/>
    </location>
    <ligand>
        <name>S-adenosyl-L-methionine</name>
        <dbReference type="ChEBI" id="CHEBI:59789"/>
    </ligand>
</feature>
<feature type="binding site" evidence="1">
    <location>
        <position position="333"/>
    </location>
    <ligand>
        <name>S-adenosyl-L-methionine</name>
        <dbReference type="ChEBI" id="CHEBI:59789"/>
    </ligand>
</feature>
<feature type="binding site" evidence="1">
    <location>
        <position position="360"/>
    </location>
    <ligand>
        <name>S-adenosyl-L-methionine</name>
        <dbReference type="ChEBI" id="CHEBI:59789"/>
    </ligand>
</feature>
<feature type="binding site" evidence="1">
    <location>
        <position position="380"/>
    </location>
    <ligand>
        <name>S-adenosyl-L-methionine</name>
        <dbReference type="ChEBI" id="CHEBI:59789"/>
    </ligand>
</feature>
<name>RLMD_SHEPC</name>
<proteinExistence type="inferred from homology"/>
<sequence length="450" mass="49343">MAQFFKAKPNSSKQLSAKLSLNVDQLDHLGAGIAQYQGKVVFIPGALPDETVTVQLTEQKKNYARAKLIKVDAQSPERVEPECPHYHTCGGCDLQHMSLSGQREHKEAALLDIMAKFAGTEGGALSPALTGEGWHYRRRARLATLFDKNTKHLSLGFRAASSSNVVPISQCQVLAKPLSDLIVPFAKLLNQLSAKASLGHLELIAADNGHFAVLRITKALNDKDLAKLSAFAEQHQIYICLQDNEGQFQGVGVELVLPVYQLLDENAQSDAVSLSFTPGNFVQVNSQINKAMVAQAMDWLAPAPDERILDLFCGMGNFSLPLAKMGADVIGVEGVAEMVSQARVNAKANNLDKLTFYHGDLSADLSLEPWMGKIDKLLLDPARAGAFESLQWLKKMKPRKVLYVSCNPASLARDSTVLLERGYRLQRLGLIDMFPQTHHIEAMALFELTK</sequence>
<dbReference type="EC" id="2.1.1.190" evidence="1"/>
<dbReference type="EMBL" id="CP000681">
    <property type="protein sequence ID" value="ABP76485.1"/>
    <property type="molecule type" value="Genomic_DNA"/>
</dbReference>
<dbReference type="SMR" id="A4Y952"/>
<dbReference type="STRING" id="319224.Sputcn32_2766"/>
<dbReference type="KEGG" id="spc:Sputcn32_2766"/>
<dbReference type="eggNOG" id="COG2265">
    <property type="taxonomic scope" value="Bacteria"/>
</dbReference>
<dbReference type="HOGENOM" id="CLU_014689_8_2_6"/>
<dbReference type="GO" id="GO:0051539">
    <property type="term" value="F:4 iron, 4 sulfur cluster binding"/>
    <property type="evidence" value="ECO:0007669"/>
    <property type="project" value="UniProtKB-KW"/>
</dbReference>
<dbReference type="GO" id="GO:0005506">
    <property type="term" value="F:iron ion binding"/>
    <property type="evidence" value="ECO:0007669"/>
    <property type="project" value="UniProtKB-UniRule"/>
</dbReference>
<dbReference type="GO" id="GO:0003723">
    <property type="term" value="F:RNA binding"/>
    <property type="evidence" value="ECO:0007669"/>
    <property type="project" value="InterPro"/>
</dbReference>
<dbReference type="GO" id="GO:0070041">
    <property type="term" value="F:rRNA (uridine-C5-)-methyltransferase activity"/>
    <property type="evidence" value="ECO:0007669"/>
    <property type="project" value="UniProtKB-UniRule"/>
</dbReference>
<dbReference type="GO" id="GO:0070475">
    <property type="term" value="P:rRNA base methylation"/>
    <property type="evidence" value="ECO:0007669"/>
    <property type="project" value="TreeGrafter"/>
</dbReference>
<dbReference type="CDD" id="cd02440">
    <property type="entry name" value="AdoMet_MTases"/>
    <property type="match status" value="1"/>
</dbReference>
<dbReference type="FunFam" id="3.40.50.150:FF:000009">
    <property type="entry name" value="23S rRNA (Uracil(1939)-C(5))-methyltransferase RlmD"/>
    <property type="match status" value="1"/>
</dbReference>
<dbReference type="FunFam" id="2.40.50.140:FF:000097">
    <property type="entry name" value="23S rRNA (uracil(1939)-C(5))-methyltransferase RlmD"/>
    <property type="match status" value="1"/>
</dbReference>
<dbReference type="Gene3D" id="2.40.50.1070">
    <property type="match status" value="1"/>
</dbReference>
<dbReference type="Gene3D" id="2.40.50.140">
    <property type="entry name" value="Nucleic acid-binding proteins"/>
    <property type="match status" value="1"/>
</dbReference>
<dbReference type="Gene3D" id="3.40.50.150">
    <property type="entry name" value="Vaccinia Virus protein VP39"/>
    <property type="match status" value="1"/>
</dbReference>
<dbReference type="HAMAP" id="MF_01010">
    <property type="entry name" value="23SrRNA_methyltr_RlmD"/>
    <property type="match status" value="1"/>
</dbReference>
<dbReference type="InterPro" id="IPR001566">
    <property type="entry name" value="23S_rRNA_MeTrfase_RlmD"/>
</dbReference>
<dbReference type="InterPro" id="IPR030390">
    <property type="entry name" value="MeTrfase_TrmA_AS"/>
</dbReference>
<dbReference type="InterPro" id="IPR030391">
    <property type="entry name" value="MeTrfase_TrmA_CS"/>
</dbReference>
<dbReference type="InterPro" id="IPR012340">
    <property type="entry name" value="NA-bd_OB-fold"/>
</dbReference>
<dbReference type="InterPro" id="IPR029063">
    <property type="entry name" value="SAM-dependent_MTases_sf"/>
</dbReference>
<dbReference type="InterPro" id="IPR002792">
    <property type="entry name" value="TRAM_dom"/>
</dbReference>
<dbReference type="InterPro" id="IPR010280">
    <property type="entry name" value="U5_MeTrfase_fam"/>
</dbReference>
<dbReference type="NCBIfam" id="NF009639">
    <property type="entry name" value="PRK13168.1"/>
    <property type="match status" value="1"/>
</dbReference>
<dbReference type="NCBIfam" id="TIGR00479">
    <property type="entry name" value="rumA"/>
    <property type="match status" value="1"/>
</dbReference>
<dbReference type="PANTHER" id="PTHR11061:SF49">
    <property type="entry name" value="23S RRNA (URACIL(1939)-C(5))-METHYLTRANSFERASE RLMD"/>
    <property type="match status" value="1"/>
</dbReference>
<dbReference type="PANTHER" id="PTHR11061">
    <property type="entry name" value="RNA M5U METHYLTRANSFERASE"/>
    <property type="match status" value="1"/>
</dbReference>
<dbReference type="Pfam" id="PF01938">
    <property type="entry name" value="TRAM"/>
    <property type="match status" value="1"/>
</dbReference>
<dbReference type="Pfam" id="PF05958">
    <property type="entry name" value="tRNA_U5-meth_tr"/>
    <property type="match status" value="1"/>
</dbReference>
<dbReference type="SUPFAM" id="SSF50249">
    <property type="entry name" value="Nucleic acid-binding proteins"/>
    <property type="match status" value="1"/>
</dbReference>
<dbReference type="SUPFAM" id="SSF53335">
    <property type="entry name" value="S-adenosyl-L-methionine-dependent methyltransferases"/>
    <property type="match status" value="1"/>
</dbReference>
<dbReference type="PROSITE" id="PS51687">
    <property type="entry name" value="SAM_MT_RNA_M5U"/>
    <property type="match status" value="1"/>
</dbReference>
<dbReference type="PROSITE" id="PS50926">
    <property type="entry name" value="TRAM"/>
    <property type="match status" value="1"/>
</dbReference>
<dbReference type="PROSITE" id="PS01230">
    <property type="entry name" value="TRMA_1"/>
    <property type="match status" value="1"/>
</dbReference>
<dbReference type="PROSITE" id="PS01231">
    <property type="entry name" value="TRMA_2"/>
    <property type="match status" value="1"/>
</dbReference>
<accession>A4Y952</accession>
<comment type="function">
    <text evidence="1">Catalyzes the formation of 5-methyl-uridine at position 1939 (m5U1939) in 23S rRNA.</text>
</comment>
<comment type="catalytic activity">
    <reaction evidence="1">
        <text>uridine(1939) in 23S rRNA + S-adenosyl-L-methionine = 5-methyluridine(1939) in 23S rRNA + S-adenosyl-L-homocysteine + H(+)</text>
        <dbReference type="Rhea" id="RHEA:42908"/>
        <dbReference type="Rhea" id="RHEA-COMP:10278"/>
        <dbReference type="Rhea" id="RHEA-COMP:10279"/>
        <dbReference type="ChEBI" id="CHEBI:15378"/>
        <dbReference type="ChEBI" id="CHEBI:57856"/>
        <dbReference type="ChEBI" id="CHEBI:59789"/>
        <dbReference type="ChEBI" id="CHEBI:65315"/>
        <dbReference type="ChEBI" id="CHEBI:74447"/>
        <dbReference type="EC" id="2.1.1.190"/>
    </reaction>
</comment>
<comment type="similarity">
    <text evidence="1">Belongs to the class I-like SAM-binding methyltransferase superfamily. RNA M5U methyltransferase family. RlmD subfamily.</text>
</comment>